<keyword id="KW-0066">ATP synthesis</keyword>
<keyword id="KW-0067">ATP-binding</keyword>
<keyword id="KW-0138">CF(0)</keyword>
<keyword id="KW-0150">Chloroplast</keyword>
<keyword id="KW-0375">Hydrogen ion transport</keyword>
<keyword id="KW-0406">Ion transport</keyword>
<keyword id="KW-0472">Membrane</keyword>
<keyword id="KW-0547">Nucleotide-binding</keyword>
<keyword id="KW-0934">Plastid</keyword>
<keyword id="KW-0793">Thylakoid</keyword>
<keyword id="KW-0812">Transmembrane</keyword>
<keyword id="KW-1133">Transmembrane helix</keyword>
<keyword id="KW-0813">Transport</keyword>
<geneLocation type="chloroplast"/>
<evidence type="ECO:0000255" key="1">
    <source>
        <dbReference type="HAMAP-Rule" id="MF_01398"/>
    </source>
</evidence>
<sequence>MNSIVNITPIIIILSEHSSEHTFGFNSDIFEANVINILLLLFGLIYVLKQSLGSTLNERQLKVLAAIQESEERLEQASSRLSESEKQLAQTQIIINQIKKEAQLTAEKVRSSILAQGQIDIERLAITGKSNIETAEKQIRRQIQQQIAFLALKKVTLQLENQMSSDIQLRIIDNNIAKLGDQL</sequence>
<comment type="function">
    <text evidence="1">F(1)F(0) ATP synthase produces ATP from ADP in the presence of a proton or sodium gradient. F-type ATPases consist of two structural domains, F(1) containing the extramembraneous catalytic core and F(0) containing the membrane proton channel, linked together by a central stalk and a peripheral stalk. During catalysis, ATP synthesis in the catalytic domain of F(1) is coupled via a rotary mechanism of the central stalk subunits to proton translocation.</text>
</comment>
<comment type="function">
    <text evidence="1">Component of the F(0) channel, it forms part of the peripheral stalk, linking F(1) to F(0).</text>
</comment>
<comment type="subunit">
    <text evidence="1">F-type ATPases have 2 components, F(1) - the catalytic core - and F(0) - the membrane proton channel. F(1) has five subunits: alpha(3), beta(3), gamma(1), delta(1), epsilon(1). F(0) has four main subunits: a(1), b(1), b'(1) and c(10-14). The alpha and beta chains form an alternating ring which encloses part of the gamma chain. F(1) is attached to F(0) by a central stalk formed by the gamma and epsilon chains, while a peripheral stalk is formed by the delta, b and b' chains.</text>
</comment>
<comment type="subcellular location">
    <subcellularLocation>
        <location evidence="1">Plastid</location>
        <location evidence="1">Chloroplast thylakoid membrane</location>
        <topology evidence="1">Single-pass membrane protein</topology>
    </subcellularLocation>
</comment>
<comment type="miscellaneous">
    <text>In plastids the F-type ATPase is also known as CF(1)CF(0).</text>
</comment>
<comment type="similarity">
    <text evidence="1">Belongs to the ATPase B chain family.</text>
</comment>
<dbReference type="EMBL" id="U38804">
    <property type="protein sequence ID" value="AAC08130.1"/>
    <property type="molecule type" value="Genomic_DNA"/>
</dbReference>
<dbReference type="PIR" id="S73165">
    <property type="entry name" value="S73165"/>
</dbReference>
<dbReference type="RefSeq" id="NP_053854.1">
    <property type="nucleotide sequence ID" value="NC_000925.1"/>
</dbReference>
<dbReference type="SMR" id="P51244"/>
<dbReference type="GeneID" id="809873"/>
<dbReference type="GO" id="GO:0009535">
    <property type="term" value="C:chloroplast thylakoid membrane"/>
    <property type="evidence" value="ECO:0007669"/>
    <property type="project" value="UniProtKB-SubCell"/>
</dbReference>
<dbReference type="GO" id="GO:0045259">
    <property type="term" value="C:proton-transporting ATP synthase complex"/>
    <property type="evidence" value="ECO:0007669"/>
    <property type="project" value="UniProtKB-KW"/>
</dbReference>
<dbReference type="GO" id="GO:0005524">
    <property type="term" value="F:ATP binding"/>
    <property type="evidence" value="ECO:0007669"/>
    <property type="project" value="UniProtKB-KW"/>
</dbReference>
<dbReference type="GO" id="GO:0046933">
    <property type="term" value="F:proton-transporting ATP synthase activity, rotational mechanism"/>
    <property type="evidence" value="ECO:0007669"/>
    <property type="project" value="UniProtKB-UniRule"/>
</dbReference>
<dbReference type="CDD" id="cd06503">
    <property type="entry name" value="ATP-synt_Fo_b"/>
    <property type="match status" value="1"/>
</dbReference>
<dbReference type="HAMAP" id="MF_01398">
    <property type="entry name" value="ATP_synth_b_bprime"/>
    <property type="match status" value="1"/>
</dbReference>
<dbReference type="InterPro" id="IPR002146">
    <property type="entry name" value="ATP_synth_b/b'su_bac/chlpt"/>
</dbReference>
<dbReference type="PANTHER" id="PTHR34264">
    <property type="entry name" value="ATP SYNTHASE SUBUNIT B, CHLOROPLASTIC"/>
    <property type="match status" value="1"/>
</dbReference>
<dbReference type="PANTHER" id="PTHR34264:SF3">
    <property type="entry name" value="ATP SYNTHASE SUBUNIT B, CHLOROPLASTIC"/>
    <property type="match status" value="1"/>
</dbReference>
<dbReference type="Pfam" id="PF00430">
    <property type="entry name" value="ATP-synt_B"/>
    <property type="match status" value="1"/>
</dbReference>
<reference key="1">
    <citation type="journal article" date="1995" name="Plant Mol. Biol. Rep.">
        <title>Complete nucleotide sequence of the Porphyra purpurea chloroplast genome.</title>
        <authorList>
            <person name="Reith M.E."/>
            <person name="Munholland J."/>
        </authorList>
    </citation>
    <scope>NUCLEOTIDE SEQUENCE [LARGE SCALE GENOMIC DNA]</scope>
    <source>
        <strain>Avonport</strain>
    </source>
</reference>
<name>ATPF_PORPU</name>
<feature type="chain" id="PRO_0000082422" description="ATP synthase subunit b, chloroplastic">
    <location>
        <begin position="1"/>
        <end position="183"/>
    </location>
</feature>
<feature type="transmembrane region" description="Helical" evidence="1">
    <location>
        <begin position="28"/>
        <end position="48"/>
    </location>
</feature>
<proteinExistence type="inferred from homology"/>
<accession>P51244</accession>
<organism>
    <name type="scientific">Porphyra purpurea</name>
    <name type="common">Red seaweed</name>
    <name type="synonym">Ulva purpurea</name>
    <dbReference type="NCBI Taxonomy" id="2787"/>
    <lineage>
        <taxon>Eukaryota</taxon>
        <taxon>Rhodophyta</taxon>
        <taxon>Bangiophyceae</taxon>
        <taxon>Bangiales</taxon>
        <taxon>Bangiaceae</taxon>
        <taxon>Porphyra</taxon>
    </lineage>
</organism>
<gene>
    <name evidence="1" type="primary">atpF</name>
</gene>
<protein>
    <recommendedName>
        <fullName evidence="1">ATP synthase subunit b, chloroplastic</fullName>
    </recommendedName>
    <alternativeName>
        <fullName evidence="1">ATP synthase F(0) sector subunit b</fullName>
    </alternativeName>
    <alternativeName>
        <fullName evidence="1">ATPase subunit I</fullName>
    </alternativeName>
</protein>